<comment type="cofactor">
    <cofactor evidence="5 8">
        <name>FAD</name>
        <dbReference type="ChEBI" id="CHEBI:57692"/>
    </cofactor>
    <text evidence="8">Binds 1 FAD per subunit in a bicovalent manner.</text>
</comment>
<comment type="subunit">
    <text evidence="4 8">Monomer.</text>
</comment>
<comment type="tissue specificity">
    <text evidence="4 5 6 8 9 10">Expressed in pollen (at protein level).</text>
</comment>
<comment type="PTM">
    <text evidence="8">The FAD cofactor is bound via a bicovalent 6-S-cysteinyl, 8alpha-N1-histidyl FAD linkage.</text>
</comment>
<comment type="PTM">
    <text evidence="4 5 6 9">The N-terminus is blocked.</text>
</comment>
<comment type="PTM">
    <text evidence="6 9 10">Glycosylated (PubMed:16121337). N-glycosylated (PubMed:8828524, PubMed:8900140). Contains fucose, N-acetylglucosamine, and mannose as main carbohydrates (in a ratio of approximately 3:2:1), and a minute amount of xylose (PubMed:8828524). The two most abundant oligosaccharides are Fuc(1)GlcNAc(2)Man(3) and Fuc(1)GlcNAc(2)Man(2), together comprising about 80% of the total carbohydrate content. They are structurally unusual in having a L-Fuc alpha-(1,3)-linked to Asn-linked GlcNAc without a Xyl beta-(1,2)-linked to the branching Man. The other oligosaccharides make up only 9% of the total carbohydrate content and are characterized by the presence of Xyl beta-(1,2)-linked to the branching Man (PubMed:8900140).</text>
</comment>
<comment type="allergen">
    <text evidence="6 7 9">Causes an allergic reaction in human. Binds to IgE of patients allergic to Bermuda grass pollen (BGP) (PubMed:16121337, PubMed:8828524). Binds to IgE in all 18 patients tested (PubMed:8828524). Binds to IgE in 50% of the 10 patients tested (PubMed:16121337). Periodate oxidation decreases the binding activity to IgE from 20% to 65% as the concentration of periodate increases from 1 mmol/L to 10 mmol/L, indicating the involvement of the carbohydrate moiety of this protein in immune responses (PubMed:8828524). The fucosylated glycan structures of this protein can bind the human C-type lectin receptors CD209 (DC-SIGN) and its related receptor CLEC4M (L-SIGN). The interaction provokes an immune response leading to the activation of RAF1 and ERK kinases and to the induction of tumor necrosis factor (TNF)-alpha expression in human THP-1 cells and monocyte-derived dendritic cells (MDDCs) (PubMed:20080962).</text>
</comment>
<comment type="similarity">
    <text evidence="17">Belongs to the oxygen-dependent FAD-linked oxidoreductase family.</text>
</comment>
<reference evidence="18" key="1">
    <citation type="submission" date="2003-10" db="EMBL/GenBank/DDBJ databases">
        <title>Molecular cloning and expression of an allergen BG60 from Bermuda grass (Cynodon dactylon).</title>
        <authorList>
            <person name="Chuang J.-G."/>
            <person name="Chow L.-P."/>
            <person name="Su S.-N."/>
        </authorList>
    </citation>
    <scope>NUCLEOTIDE SEQUENCE [MRNA]</scope>
</reference>
<reference key="2">
    <citation type="journal article" date="2001" name="Biochem. Biophys. Res. Commun.">
        <title>Structural characterization of the 60-kDa bermuda grass pollen isoallergens, a covalent flavoprotein.</title>
        <authorList>
            <person name="Liaw S."/>
            <person name="Lee D.Y."/>
            <person name="Chow L.P."/>
            <person name="Lau G.X."/>
            <person name="Su S.N."/>
            <person name="Chow L."/>
        </authorList>
    </citation>
    <scope>PROTEIN SEQUENCE OF 76-86; 195-218; 347-365 AND 464-476</scope>
    <scope>COFACTOR</scope>
    <scope>TISSUE SPECIFICITY</scope>
    <scope>PTM</scope>
    <scope>CIRCULAR DICHROISM ANALYSIS</scope>
</reference>
<reference key="3">
    <citation type="journal article" date="1996" name="J. Allergy Clin. Immunol.">
        <title>Immunologic and physicochemical studies of Bermuda grass pollen antigen BG60.</title>
        <authorList>
            <person name="Su S.N."/>
            <person name="Shu P."/>
            <person name="Lau G.X."/>
            <person name="Yang S.Y."/>
            <person name="Huang S.W."/>
            <person name="Lee Y.C."/>
        </authorList>
    </citation>
    <scope>TISSUE SPECIFICITY</scope>
    <scope>PTM</scope>
    <scope>GLYCOSYLATION</scope>
    <scope>ALLERGEN</scope>
</reference>
<reference key="4">
    <citation type="journal article" date="1996" name="J. Biol. Chem.">
        <title>The carbohydrate moiety of the bermuda grass antigen BG60. New oligosaccharides of plant origin.</title>
        <authorList>
            <person name="Ohsuga H."/>
            <person name="Su S.N."/>
            <person name="Takahashi N."/>
            <person name="Yang S.Y."/>
            <person name="Nakagawa H."/>
            <person name="Shimada I."/>
            <person name="Arata Y."/>
            <person name="Lee Y.C."/>
        </authorList>
    </citation>
    <scope>TISSUE SPECIFICITY</scope>
    <scope>GLYCOSYLATION</scope>
</reference>
<reference key="5">
    <citation type="journal article" date="1999" name="J. Struct. Biol.">
        <title>Crystallization and preliminary diffraction data of 60-kDa glycosylated pollen isoallergens from Bermuda grass.</title>
        <authorList>
            <person name="Liaw S.H."/>
            <person name="Lee D.Y."/>
            <person name="Yang S.Y."/>
            <person name="Su S.N."/>
        </authorList>
    </citation>
    <scope>CRYSTALLIZATION</scope>
    <scope>SUBUNIT</scope>
    <scope>TISSUE SPECIFICITY</scope>
    <scope>PTM</scope>
</reference>
<reference key="6">
    <citation type="journal article" date="2005" name="Proteomics">
        <title>Sub-proteome analysis of novel IgE-binding proteins from Bermuda grass pollen.</title>
        <authorList>
            <person name="Kao S.H."/>
            <person name="Su S.N."/>
            <person name="Huang S.W."/>
            <person name="Tsai J.J."/>
            <person name="Chow L.P."/>
        </authorList>
    </citation>
    <scope>IDENTIFICATION BY MASS SPECTROMETRY</scope>
    <scope>TISSUE SPECIFICITY</scope>
    <scope>PTM</scope>
    <scope>GLYCOSYLATION</scope>
    <scope>ALLERGEN</scope>
</reference>
<reference key="7">
    <citation type="journal article" date="2010" name="J. Biol. Chem.">
        <title>Functional interaction of common allergens and a C-type lectin receptor, dendritic cell-specific ICAM3-grabbing non-integrin (DC-SIGN), on human dendritic cells.</title>
        <authorList>
            <person name="Hsu S.C."/>
            <person name="Chen C.H."/>
            <person name="Tsai S.H."/>
            <person name="Kawasaki H."/>
            <person name="Hung C.H."/>
            <person name="Chu Y.T."/>
            <person name="Chang H.W."/>
            <person name="Zhou Y."/>
            <person name="Fu J."/>
            <person name="Plunkett B."/>
            <person name="Su S.N."/>
            <person name="Vieths S."/>
            <person name="Lee R.T."/>
            <person name="Lee Y.C."/>
            <person name="Huang S.K."/>
        </authorList>
    </citation>
    <scope>ALLERGEN</scope>
</reference>
<reference evidence="19" key="8">
    <citation type="journal article" date="2012" name="Acta Crystallogr. D">
        <title>Various cross-reactivity of the grass pollen group 4 allergens: crystallographic study of the Bermuda grass isoallergen Cyn d 4.</title>
        <authorList>
            <person name="Huang T.H."/>
            <person name="Peng H.J."/>
            <person name="Su S.N."/>
            <person name="Liaw S.H."/>
        </authorList>
    </citation>
    <scope>X-RAY CRYSTALLOGRAPHY (2.15 ANGSTROMS) OF 26-522 IN COMPLEX WITH FAD</scope>
    <scope>COFACTOR</scope>
    <scope>SUBUNIT</scope>
    <scope>TISSUE SPECIFICITY</scope>
    <scope>DISULFIDE BONDS</scope>
    <scope>GLYCOSYLATION AT ASN-88 AND ASN-325</scope>
</reference>
<organism evidence="18">
    <name type="scientific">Cynodon dactylon</name>
    <name type="common">Bermuda grass</name>
    <name type="synonym">Panicum dactylon</name>
    <dbReference type="NCBI Taxonomy" id="28909"/>
    <lineage>
        <taxon>Eukaryota</taxon>
        <taxon>Viridiplantae</taxon>
        <taxon>Streptophyta</taxon>
        <taxon>Embryophyta</taxon>
        <taxon>Tracheophyta</taxon>
        <taxon>Spermatophyta</taxon>
        <taxon>Magnoliopsida</taxon>
        <taxon>Liliopsida</taxon>
        <taxon>Poales</taxon>
        <taxon>Poaceae</taxon>
        <taxon>PACMAD clade</taxon>
        <taxon>Chloridoideae</taxon>
        <taxon>Cynodonteae</taxon>
        <taxon>Eleusininae</taxon>
        <taxon>Cynodon</taxon>
    </lineage>
</organism>
<sequence>MARSRAFAFALLICAVAASCHVALSAPPPYAKQVERDFLTCLTKDIPPRQLYAKSSPAYASVWSSTVRNIKFLSDKTVKPLYIITPTNASHIQAAVVCGRRHGMRIRVRSGGHDYEGLSYRSEKPEPFAVVDMNKMRAVSIDGKAATAWVDSGAQLGDLYYGIAKASPKLGFPAGVCTTIGVGGHFSGGGFGMLLRKYGTAADNVIDAKVVDAQGRLLDRKAMGEDHFWAIRGGGGESFGIVASWQVKLLPVPPKVTVFQVHKGIKEGAIDLVTKWQTVAPALPDDLMIRIMAMGQGAMFEALYLGTCKDLVLLMTARFPELGMNATHCKEMTWIESVPYIPMGPKGTVRDLLNRTSNIKAFGKYKSDYVLEPIPKSDWEKIFTWLVKPGAGVMIMDPYGGGIASVPESATPFPRRSGVLFNIQYVVYWFGEGAAALPTQWTRDIYDFMTPYVSKNPRQAYVNYRDLDLGVNQVVGNVSTYASGKVWGEKYFKGNFERLARTKGKIDPEDYFRNEQSIPPLL</sequence>
<name>CYND4_CYNDA</name>
<proteinExistence type="evidence at protein level"/>
<keyword id="KW-0002">3D-structure</keyword>
<keyword id="KW-0020">Allergen</keyword>
<keyword id="KW-0903">Direct protein sequencing</keyword>
<keyword id="KW-1015">Disulfide bond</keyword>
<keyword id="KW-0274">FAD</keyword>
<keyword id="KW-0285">Flavoprotein</keyword>
<keyword id="KW-0325">Glycoprotein</keyword>
<keyword id="KW-0547">Nucleotide-binding</keyword>
<keyword id="KW-0560">Oxidoreductase</keyword>
<keyword id="KW-0732">Signal</keyword>
<evidence type="ECO:0000255" key="1"/>
<evidence type="ECO:0000255" key="2">
    <source>
        <dbReference type="PROSITE-ProRule" id="PRU00498"/>
    </source>
</evidence>
<evidence type="ECO:0000255" key="3">
    <source>
        <dbReference type="PROSITE-ProRule" id="PRU00718"/>
    </source>
</evidence>
<evidence type="ECO:0000269" key="4">
    <source>
    </source>
</evidence>
<evidence type="ECO:0000269" key="5">
    <source>
    </source>
</evidence>
<evidence type="ECO:0000269" key="6">
    <source>
    </source>
</evidence>
<evidence type="ECO:0000269" key="7">
    <source>
    </source>
</evidence>
<evidence type="ECO:0000269" key="8">
    <source>
    </source>
</evidence>
<evidence type="ECO:0000269" key="9">
    <source>
    </source>
</evidence>
<evidence type="ECO:0000269" key="10">
    <source>
    </source>
</evidence>
<evidence type="ECO:0000303" key="11">
    <source>
    </source>
</evidence>
<evidence type="ECO:0000303" key="12">
    <source>
    </source>
</evidence>
<evidence type="ECO:0000303" key="13">
    <source>
    </source>
</evidence>
<evidence type="ECO:0000303" key="14">
    <source>
    </source>
</evidence>
<evidence type="ECO:0000303" key="15">
    <source>
    </source>
</evidence>
<evidence type="ECO:0000303" key="16">
    <source>
    </source>
</evidence>
<evidence type="ECO:0000305" key="17"/>
<evidence type="ECO:0000312" key="18">
    <source>
        <dbReference type="EMBL" id="AAS02108.1"/>
    </source>
</evidence>
<evidence type="ECO:0007744" key="19">
    <source>
        <dbReference type="PDB" id="4DNS"/>
    </source>
</evidence>
<evidence type="ECO:0007829" key="20">
    <source>
        <dbReference type="PDB" id="4DNS"/>
    </source>
</evidence>
<feature type="signal peptide" evidence="1">
    <location>
        <begin position="1"/>
        <end position="25"/>
    </location>
</feature>
<feature type="chain" id="PRO_5004261372" description="Berberine bridge enzyme-like Cyn d 4" evidence="1">
    <location>
        <begin position="26"/>
        <end position="522"/>
    </location>
</feature>
<feature type="domain" description="FAD-binding PCMH-type" evidence="3">
    <location>
        <begin position="76"/>
        <end position="252"/>
    </location>
</feature>
<feature type="binding site" evidence="8 19">
    <location>
        <begin position="108"/>
        <end position="114"/>
    </location>
    <ligand>
        <name>FAD</name>
        <dbReference type="ChEBI" id="CHEBI:57692"/>
    </ligand>
</feature>
<feature type="binding site" evidence="8 19">
    <location>
        <position position="119"/>
    </location>
    <ligand>
        <name>FAD</name>
        <dbReference type="ChEBI" id="CHEBI:57692"/>
    </ligand>
</feature>
<feature type="binding site" evidence="8 19">
    <location>
        <position position="152"/>
    </location>
    <ligand>
        <name>FAD</name>
        <dbReference type="ChEBI" id="CHEBI:57692"/>
    </ligand>
</feature>
<feature type="binding site" evidence="8 19">
    <location>
        <begin position="176"/>
        <end position="177"/>
    </location>
    <ligand>
        <name>FAD</name>
        <dbReference type="ChEBI" id="CHEBI:57692"/>
    </ligand>
</feature>
<feature type="binding site" evidence="8 19">
    <location>
        <begin position="181"/>
        <end position="185"/>
    </location>
    <ligand>
        <name>FAD</name>
        <dbReference type="ChEBI" id="CHEBI:57692"/>
    </ligand>
</feature>
<feature type="binding site" evidence="8 19">
    <location>
        <position position="191"/>
    </location>
    <ligand>
        <name>FAD</name>
        <dbReference type="ChEBI" id="CHEBI:57692"/>
    </ligand>
</feature>
<feature type="binding site" evidence="8 19">
    <location>
        <position position="237"/>
    </location>
    <ligand>
        <name>FAD</name>
        <dbReference type="ChEBI" id="CHEBI:57692"/>
    </ligand>
</feature>
<feature type="binding site" evidence="8 19">
    <location>
        <position position="242"/>
    </location>
    <ligand>
        <name>FAD</name>
        <dbReference type="ChEBI" id="CHEBI:57692"/>
    </ligand>
</feature>
<feature type="binding site" evidence="8 19">
    <location>
        <begin position="461"/>
        <end position="465"/>
    </location>
    <ligand>
        <name>FAD</name>
        <dbReference type="ChEBI" id="CHEBI:57692"/>
    </ligand>
</feature>
<feature type="glycosylation site" description="N-linked (GlcNAc...) asparagine" evidence="2 8 19">
    <location>
        <position position="88"/>
    </location>
</feature>
<feature type="glycosylation site" description="N-linked (GlcNAc...) asparagine" evidence="2 8 19">
    <location>
        <position position="325"/>
    </location>
</feature>
<feature type="glycosylation site" description="N-linked (GlcNAc...) asparagine" evidence="2">
    <location>
        <position position="354"/>
    </location>
</feature>
<feature type="glycosylation site" description="N-linked (GlcNAc...) asparagine" evidence="2">
    <location>
        <position position="477"/>
    </location>
</feature>
<feature type="disulfide bond" evidence="8 19">
    <location>
        <begin position="41"/>
        <end position="98"/>
    </location>
</feature>
<feature type="disulfide bond" evidence="8 19">
    <location>
        <begin position="308"/>
        <end position="329"/>
    </location>
</feature>
<feature type="cross-link" description="6-(S-cysteinyl)-8alpha-(pros-histidyl)-FAD (His-Cys)" evidence="8 19">
    <location>
        <begin position="113"/>
        <end position="177"/>
    </location>
</feature>
<feature type="helix" evidence="20">
    <location>
        <begin position="38"/>
        <end position="43"/>
    </location>
</feature>
<feature type="helix" evidence="20">
    <location>
        <begin position="48"/>
        <end position="50"/>
    </location>
</feature>
<feature type="strand" evidence="20">
    <location>
        <begin position="51"/>
        <end position="53"/>
    </location>
</feature>
<feature type="helix" evidence="20">
    <location>
        <begin position="59"/>
        <end position="64"/>
    </location>
</feature>
<feature type="helix" evidence="20">
    <location>
        <begin position="70"/>
        <end position="72"/>
    </location>
</feature>
<feature type="strand" evidence="20">
    <location>
        <begin position="74"/>
        <end position="78"/>
    </location>
</feature>
<feature type="strand" evidence="20">
    <location>
        <begin position="81"/>
        <end position="84"/>
    </location>
</feature>
<feature type="helix" evidence="20">
    <location>
        <begin position="89"/>
        <end position="101"/>
    </location>
</feature>
<feature type="strand" evidence="20">
    <location>
        <begin position="105"/>
        <end position="111"/>
    </location>
</feature>
<feature type="turn" evidence="20">
    <location>
        <begin position="118"/>
        <end position="120"/>
    </location>
</feature>
<feature type="strand" evidence="20">
    <location>
        <begin position="122"/>
        <end position="124"/>
    </location>
</feature>
<feature type="strand" evidence="20">
    <location>
        <begin position="128"/>
        <end position="132"/>
    </location>
</feature>
<feature type="helix" evidence="20">
    <location>
        <begin position="133"/>
        <end position="135"/>
    </location>
</feature>
<feature type="strand" evidence="20">
    <location>
        <begin position="139"/>
        <end position="141"/>
    </location>
</feature>
<feature type="turn" evidence="20">
    <location>
        <begin position="143"/>
        <end position="145"/>
    </location>
</feature>
<feature type="strand" evidence="20">
    <location>
        <begin position="147"/>
        <end position="151"/>
    </location>
</feature>
<feature type="helix" evidence="20">
    <location>
        <begin position="156"/>
        <end position="166"/>
    </location>
</feature>
<feature type="helix" evidence="20">
    <location>
        <begin position="182"/>
        <end position="187"/>
    </location>
</feature>
<feature type="helix" evidence="20">
    <location>
        <begin position="195"/>
        <end position="198"/>
    </location>
</feature>
<feature type="helix" evidence="20">
    <location>
        <begin position="202"/>
        <end position="204"/>
    </location>
</feature>
<feature type="strand" evidence="20">
    <location>
        <begin position="205"/>
        <end position="211"/>
    </location>
</feature>
<feature type="helix" evidence="20">
    <location>
        <begin position="220"/>
        <end position="223"/>
    </location>
</feature>
<feature type="helix" evidence="20">
    <location>
        <begin position="225"/>
        <end position="230"/>
    </location>
</feature>
<feature type="turn" evidence="20">
    <location>
        <begin position="231"/>
        <end position="233"/>
    </location>
</feature>
<feature type="strand" evidence="20">
    <location>
        <begin position="241"/>
        <end position="248"/>
    </location>
</feature>
<feature type="strand" evidence="20">
    <location>
        <begin position="256"/>
        <end position="264"/>
    </location>
</feature>
<feature type="helix" evidence="20">
    <location>
        <begin position="265"/>
        <end position="267"/>
    </location>
</feature>
<feature type="helix" evidence="20">
    <location>
        <begin position="269"/>
        <end position="279"/>
    </location>
</feature>
<feature type="turn" evidence="20">
    <location>
        <begin position="280"/>
        <end position="282"/>
    </location>
</feature>
<feature type="strand" evidence="20">
    <location>
        <begin position="287"/>
        <end position="294"/>
    </location>
</feature>
<feature type="strand" evidence="20">
    <location>
        <begin position="297"/>
        <end position="306"/>
    </location>
</feature>
<feature type="helix" evidence="20">
    <location>
        <begin position="308"/>
        <end position="318"/>
    </location>
</feature>
<feature type="helix" evidence="20">
    <location>
        <begin position="320"/>
        <end position="322"/>
    </location>
</feature>
<feature type="strand" evidence="20">
    <location>
        <begin position="330"/>
        <end position="332"/>
    </location>
</feature>
<feature type="helix" evidence="20">
    <location>
        <begin position="334"/>
        <end position="343"/>
    </location>
</feature>
<feature type="helix" evidence="20">
    <location>
        <begin position="349"/>
        <end position="353"/>
    </location>
</feature>
<feature type="strand" evidence="20">
    <location>
        <begin position="361"/>
        <end position="370"/>
    </location>
</feature>
<feature type="helix" evidence="20">
    <location>
        <begin position="376"/>
        <end position="384"/>
    </location>
</feature>
<feature type="helix" evidence="20">
    <location>
        <begin position="385"/>
        <end position="387"/>
    </location>
</feature>
<feature type="strand" evidence="20">
    <location>
        <begin position="393"/>
        <end position="398"/>
    </location>
</feature>
<feature type="helix" evidence="20">
    <location>
        <begin position="401"/>
        <end position="405"/>
    </location>
</feature>
<feature type="strand" evidence="20">
    <location>
        <begin position="410"/>
        <end position="412"/>
    </location>
</feature>
<feature type="strand" evidence="20">
    <location>
        <begin position="421"/>
        <end position="430"/>
    </location>
</feature>
<feature type="helix" evidence="20">
    <location>
        <begin position="432"/>
        <end position="434"/>
    </location>
</feature>
<feature type="helix" evidence="20">
    <location>
        <begin position="436"/>
        <end position="449"/>
    </location>
</feature>
<feature type="turn" evidence="20">
    <location>
        <begin position="450"/>
        <end position="452"/>
    </location>
</feature>
<feature type="helix" evidence="20">
    <location>
        <begin position="467"/>
        <end position="469"/>
    </location>
</feature>
<feature type="helix" evidence="20">
    <location>
        <begin position="481"/>
        <end position="492"/>
    </location>
</feature>
<feature type="helix" evidence="20">
    <location>
        <begin position="493"/>
        <end position="495"/>
    </location>
</feature>
<feature type="helix" evidence="20">
    <location>
        <begin position="496"/>
        <end position="506"/>
    </location>
</feature>
<dbReference type="EC" id="1.-.-.-" evidence="17"/>
<dbReference type="EMBL" id="AY451241">
    <property type="protein sequence ID" value="AAS02108.1"/>
    <property type="molecule type" value="mRNA"/>
</dbReference>
<dbReference type="PDB" id="4DNS">
    <property type="method" value="X-ray"/>
    <property type="resolution" value="2.15 A"/>
    <property type="chains" value="A/B=26-522"/>
</dbReference>
<dbReference type="PDBsum" id="4DNS"/>
<dbReference type="SMR" id="Q5QJ60"/>
<dbReference type="Allergome" id="819">
    <property type="allergen name" value="Cyn d 4"/>
</dbReference>
<dbReference type="iPTMnet" id="Q5QJ60"/>
<dbReference type="EvolutionaryTrace" id="Q5QJ60"/>
<dbReference type="GO" id="GO:0071949">
    <property type="term" value="F:FAD binding"/>
    <property type="evidence" value="ECO:0000314"/>
    <property type="project" value="UniProtKB"/>
</dbReference>
<dbReference type="GO" id="GO:0016491">
    <property type="term" value="F:oxidoreductase activity"/>
    <property type="evidence" value="ECO:0000305"/>
    <property type="project" value="UniProtKB"/>
</dbReference>
<dbReference type="Gene3D" id="3.30.465.10">
    <property type="match status" value="1"/>
</dbReference>
<dbReference type="Gene3D" id="3.40.462.20">
    <property type="match status" value="1"/>
</dbReference>
<dbReference type="Gene3D" id="3.30.43.10">
    <property type="entry name" value="Uridine Diphospho-n-acetylenolpyruvylglucosamine Reductase, domain 2"/>
    <property type="match status" value="1"/>
</dbReference>
<dbReference type="InterPro" id="IPR012951">
    <property type="entry name" value="BBE"/>
</dbReference>
<dbReference type="InterPro" id="IPR016166">
    <property type="entry name" value="FAD-bd_PCMH"/>
</dbReference>
<dbReference type="InterPro" id="IPR036318">
    <property type="entry name" value="FAD-bd_PCMH-like_sf"/>
</dbReference>
<dbReference type="InterPro" id="IPR016167">
    <property type="entry name" value="FAD-bd_PCMH_sub1"/>
</dbReference>
<dbReference type="InterPro" id="IPR016169">
    <property type="entry name" value="FAD-bd_PCMH_sub2"/>
</dbReference>
<dbReference type="InterPro" id="IPR006094">
    <property type="entry name" value="Oxid_FAD_bind_N"/>
</dbReference>
<dbReference type="PANTHER" id="PTHR32448">
    <property type="entry name" value="OS08G0158400 PROTEIN"/>
    <property type="match status" value="1"/>
</dbReference>
<dbReference type="Pfam" id="PF08031">
    <property type="entry name" value="BBE"/>
    <property type="match status" value="1"/>
</dbReference>
<dbReference type="Pfam" id="PF01565">
    <property type="entry name" value="FAD_binding_4"/>
    <property type="match status" value="1"/>
</dbReference>
<dbReference type="SUPFAM" id="SSF56176">
    <property type="entry name" value="FAD-binding/transporter-associated domain-like"/>
    <property type="match status" value="1"/>
</dbReference>
<dbReference type="PROSITE" id="PS51387">
    <property type="entry name" value="FAD_PCMH"/>
    <property type="match status" value="1"/>
</dbReference>
<protein>
    <recommendedName>
        <fullName evidence="17">Berberine bridge enzyme-like Cyn d 4</fullName>
    </recommendedName>
    <alternativeName>
        <fullName evidence="15 16">60 kDa pollen antigen</fullName>
        <shortName evidence="13 15 16">BG60</shortName>
    </alternativeName>
    <alternativeName>
        <fullName evidence="13">Cyn d BG60</fullName>
    </alternativeName>
    <alternativeName>
        <fullName evidence="18">FAD-linked oxidoreductase BG60</fullName>
        <ecNumber evidence="17">1.-.-.-</ecNumber>
    </alternativeName>
    <alternativeName>
        <fullName evidence="11 12 14">Pollen isoallergen BG60</fullName>
    </alternativeName>
    <allergenName evidence="14">Cyn d 4</allergenName>
</protein>
<accession>Q5QJ60</accession>